<name>PURA_CLOB1</name>
<feature type="chain" id="PRO_1000000802" description="Adenylosuccinate synthetase">
    <location>
        <begin position="1"/>
        <end position="428"/>
    </location>
</feature>
<feature type="active site" description="Proton acceptor" evidence="1">
    <location>
        <position position="13"/>
    </location>
</feature>
<feature type="active site" description="Proton donor" evidence="1">
    <location>
        <position position="41"/>
    </location>
</feature>
<feature type="binding site" evidence="1">
    <location>
        <begin position="12"/>
        <end position="18"/>
    </location>
    <ligand>
        <name>GTP</name>
        <dbReference type="ChEBI" id="CHEBI:37565"/>
    </ligand>
</feature>
<feature type="binding site" description="in other chain" evidence="1">
    <location>
        <begin position="13"/>
        <end position="16"/>
    </location>
    <ligand>
        <name>IMP</name>
        <dbReference type="ChEBI" id="CHEBI:58053"/>
        <note>ligand shared between dimeric partners</note>
    </ligand>
</feature>
<feature type="binding site" evidence="1">
    <location>
        <position position="13"/>
    </location>
    <ligand>
        <name>Mg(2+)</name>
        <dbReference type="ChEBI" id="CHEBI:18420"/>
    </ligand>
</feature>
<feature type="binding site" description="in other chain" evidence="1">
    <location>
        <begin position="38"/>
        <end position="41"/>
    </location>
    <ligand>
        <name>IMP</name>
        <dbReference type="ChEBI" id="CHEBI:58053"/>
        <note>ligand shared between dimeric partners</note>
    </ligand>
</feature>
<feature type="binding site" evidence="1">
    <location>
        <begin position="40"/>
        <end position="42"/>
    </location>
    <ligand>
        <name>GTP</name>
        <dbReference type="ChEBI" id="CHEBI:37565"/>
    </ligand>
</feature>
<feature type="binding site" evidence="1">
    <location>
        <position position="40"/>
    </location>
    <ligand>
        <name>Mg(2+)</name>
        <dbReference type="ChEBI" id="CHEBI:18420"/>
    </ligand>
</feature>
<feature type="binding site" description="in other chain" evidence="1">
    <location>
        <position position="130"/>
    </location>
    <ligand>
        <name>IMP</name>
        <dbReference type="ChEBI" id="CHEBI:58053"/>
        <note>ligand shared between dimeric partners</note>
    </ligand>
</feature>
<feature type="binding site" evidence="1">
    <location>
        <position position="144"/>
    </location>
    <ligand>
        <name>IMP</name>
        <dbReference type="ChEBI" id="CHEBI:58053"/>
        <note>ligand shared between dimeric partners</note>
    </ligand>
</feature>
<feature type="binding site" description="in other chain" evidence="1">
    <location>
        <position position="225"/>
    </location>
    <ligand>
        <name>IMP</name>
        <dbReference type="ChEBI" id="CHEBI:58053"/>
        <note>ligand shared between dimeric partners</note>
    </ligand>
</feature>
<feature type="binding site" description="in other chain" evidence="1">
    <location>
        <position position="240"/>
    </location>
    <ligand>
        <name>IMP</name>
        <dbReference type="ChEBI" id="CHEBI:58053"/>
        <note>ligand shared between dimeric partners</note>
    </ligand>
</feature>
<feature type="binding site" evidence="1">
    <location>
        <begin position="300"/>
        <end position="306"/>
    </location>
    <ligand>
        <name>substrate</name>
    </ligand>
</feature>
<feature type="binding site" description="in other chain" evidence="1">
    <location>
        <position position="304"/>
    </location>
    <ligand>
        <name>IMP</name>
        <dbReference type="ChEBI" id="CHEBI:58053"/>
        <note>ligand shared between dimeric partners</note>
    </ligand>
</feature>
<feature type="binding site" evidence="1">
    <location>
        <position position="306"/>
    </location>
    <ligand>
        <name>GTP</name>
        <dbReference type="ChEBI" id="CHEBI:37565"/>
    </ligand>
</feature>
<feature type="binding site" evidence="1">
    <location>
        <begin position="332"/>
        <end position="334"/>
    </location>
    <ligand>
        <name>GTP</name>
        <dbReference type="ChEBI" id="CHEBI:37565"/>
    </ligand>
</feature>
<feature type="binding site" evidence="1">
    <location>
        <begin position="414"/>
        <end position="416"/>
    </location>
    <ligand>
        <name>GTP</name>
        <dbReference type="ChEBI" id="CHEBI:37565"/>
    </ligand>
</feature>
<keyword id="KW-0963">Cytoplasm</keyword>
<keyword id="KW-0342">GTP-binding</keyword>
<keyword id="KW-0436">Ligase</keyword>
<keyword id="KW-0460">Magnesium</keyword>
<keyword id="KW-0479">Metal-binding</keyword>
<keyword id="KW-0547">Nucleotide-binding</keyword>
<keyword id="KW-0658">Purine biosynthesis</keyword>
<gene>
    <name evidence="1" type="primary">purA</name>
    <name type="ordered locus">CLB_3709</name>
</gene>
<reference key="1">
    <citation type="journal article" date="2007" name="PLoS ONE">
        <title>Analysis of the neurotoxin complex genes in Clostridium botulinum A1-A4 and B1 strains: BoNT/A3, /Ba4 and /B1 clusters are located within plasmids.</title>
        <authorList>
            <person name="Smith T.J."/>
            <person name="Hill K.K."/>
            <person name="Foley B.T."/>
            <person name="Detter J.C."/>
            <person name="Munk A.C."/>
            <person name="Bruce D.C."/>
            <person name="Doggett N.A."/>
            <person name="Smith L.A."/>
            <person name="Marks J.D."/>
            <person name="Xie G."/>
            <person name="Brettin T.S."/>
        </authorList>
    </citation>
    <scope>NUCLEOTIDE SEQUENCE [LARGE SCALE GENOMIC DNA]</scope>
    <source>
        <strain>ATCC 19397 / Type A</strain>
    </source>
</reference>
<comment type="function">
    <text evidence="1">Plays an important role in the de novo pathway of purine nucleotide biosynthesis. Catalyzes the first committed step in the biosynthesis of AMP from IMP.</text>
</comment>
<comment type="catalytic activity">
    <reaction evidence="1">
        <text>IMP + L-aspartate + GTP = N(6)-(1,2-dicarboxyethyl)-AMP + GDP + phosphate + 2 H(+)</text>
        <dbReference type="Rhea" id="RHEA:15753"/>
        <dbReference type="ChEBI" id="CHEBI:15378"/>
        <dbReference type="ChEBI" id="CHEBI:29991"/>
        <dbReference type="ChEBI" id="CHEBI:37565"/>
        <dbReference type="ChEBI" id="CHEBI:43474"/>
        <dbReference type="ChEBI" id="CHEBI:57567"/>
        <dbReference type="ChEBI" id="CHEBI:58053"/>
        <dbReference type="ChEBI" id="CHEBI:58189"/>
        <dbReference type="EC" id="6.3.4.4"/>
    </reaction>
</comment>
<comment type="cofactor">
    <cofactor evidence="1">
        <name>Mg(2+)</name>
        <dbReference type="ChEBI" id="CHEBI:18420"/>
    </cofactor>
    <text evidence="1">Binds 1 Mg(2+) ion per subunit.</text>
</comment>
<comment type="pathway">
    <text evidence="1">Purine metabolism; AMP biosynthesis via de novo pathway; AMP from IMP: step 1/2.</text>
</comment>
<comment type="subunit">
    <text evidence="1">Homodimer.</text>
</comment>
<comment type="subcellular location">
    <subcellularLocation>
        <location evidence="1">Cytoplasm</location>
    </subcellularLocation>
</comment>
<comment type="similarity">
    <text evidence="1">Belongs to the adenylosuccinate synthetase family.</text>
</comment>
<dbReference type="EC" id="6.3.4.4" evidence="1"/>
<dbReference type="EMBL" id="CP000726">
    <property type="protein sequence ID" value="ABS32366.1"/>
    <property type="molecule type" value="Genomic_DNA"/>
</dbReference>
<dbReference type="RefSeq" id="WP_012048438.1">
    <property type="nucleotide sequence ID" value="NC_009697.1"/>
</dbReference>
<dbReference type="SMR" id="A7FZF9"/>
<dbReference type="KEGG" id="cba:CLB_3709"/>
<dbReference type="HOGENOM" id="CLU_029848_0_0_9"/>
<dbReference type="UniPathway" id="UPA00075">
    <property type="reaction ID" value="UER00335"/>
</dbReference>
<dbReference type="GO" id="GO:0005737">
    <property type="term" value="C:cytoplasm"/>
    <property type="evidence" value="ECO:0007669"/>
    <property type="project" value="UniProtKB-SubCell"/>
</dbReference>
<dbReference type="GO" id="GO:0004019">
    <property type="term" value="F:adenylosuccinate synthase activity"/>
    <property type="evidence" value="ECO:0007669"/>
    <property type="project" value="UniProtKB-UniRule"/>
</dbReference>
<dbReference type="GO" id="GO:0005525">
    <property type="term" value="F:GTP binding"/>
    <property type="evidence" value="ECO:0007669"/>
    <property type="project" value="UniProtKB-UniRule"/>
</dbReference>
<dbReference type="GO" id="GO:0000287">
    <property type="term" value="F:magnesium ion binding"/>
    <property type="evidence" value="ECO:0007669"/>
    <property type="project" value="UniProtKB-UniRule"/>
</dbReference>
<dbReference type="GO" id="GO:0044208">
    <property type="term" value="P:'de novo' AMP biosynthetic process"/>
    <property type="evidence" value="ECO:0007669"/>
    <property type="project" value="UniProtKB-UniRule"/>
</dbReference>
<dbReference type="GO" id="GO:0046040">
    <property type="term" value="P:IMP metabolic process"/>
    <property type="evidence" value="ECO:0007669"/>
    <property type="project" value="TreeGrafter"/>
</dbReference>
<dbReference type="CDD" id="cd03108">
    <property type="entry name" value="AdSS"/>
    <property type="match status" value="1"/>
</dbReference>
<dbReference type="FunFam" id="1.10.300.10:FF:000001">
    <property type="entry name" value="Adenylosuccinate synthetase"/>
    <property type="match status" value="1"/>
</dbReference>
<dbReference type="FunFam" id="3.90.170.10:FF:000001">
    <property type="entry name" value="Adenylosuccinate synthetase"/>
    <property type="match status" value="1"/>
</dbReference>
<dbReference type="Gene3D" id="3.40.440.10">
    <property type="entry name" value="Adenylosuccinate Synthetase, subunit A, domain 1"/>
    <property type="match status" value="1"/>
</dbReference>
<dbReference type="Gene3D" id="1.10.300.10">
    <property type="entry name" value="Adenylosuccinate Synthetase, subunit A, domain 2"/>
    <property type="match status" value="1"/>
</dbReference>
<dbReference type="Gene3D" id="3.90.170.10">
    <property type="entry name" value="Adenylosuccinate Synthetase, subunit A, domain 3"/>
    <property type="match status" value="1"/>
</dbReference>
<dbReference type="HAMAP" id="MF_00011">
    <property type="entry name" value="Adenylosucc_synth"/>
    <property type="match status" value="1"/>
</dbReference>
<dbReference type="InterPro" id="IPR018220">
    <property type="entry name" value="Adenylosuccin_syn_GTP-bd"/>
</dbReference>
<dbReference type="InterPro" id="IPR033128">
    <property type="entry name" value="Adenylosuccin_syn_Lys_AS"/>
</dbReference>
<dbReference type="InterPro" id="IPR042109">
    <property type="entry name" value="Adenylosuccinate_synth_dom1"/>
</dbReference>
<dbReference type="InterPro" id="IPR042110">
    <property type="entry name" value="Adenylosuccinate_synth_dom2"/>
</dbReference>
<dbReference type="InterPro" id="IPR042111">
    <property type="entry name" value="Adenylosuccinate_synth_dom3"/>
</dbReference>
<dbReference type="InterPro" id="IPR001114">
    <property type="entry name" value="Adenylosuccinate_synthetase"/>
</dbReference>
<dbReference type="InterPro" id="IPR027417">
    <property type="entry name" value="P-loop_NTPase"/>
</dbReference>
<dbReference type="NCBIfam" id="NF002223">
    <property type="entry name" value="PRK01117.1"/>
    <property type="match status" value="1"/>
</dbReference>
<dbReference type="NCBIfam" id="TIGR00184">
    <property type="entry name" value="purA"/>
    <property type="match status" value="1"/>
</dbReference>
<dbReference type="PANTHER" id="PTHR11846">
    <property type="entry name" value="ADENYLOSUCCINATE SYNTHETASE"/>
    <property type="match status" value="1"/>
</dbReference>
<dbReference type="PANTHER" id="PTHR11846:SF0">
    <property type="entry name" value="ADENYLOSUCCINATE SYNTHETASE"/>
    <property type="match status" value="1"/>
</dbReference>
<dbReference type="Pfam" id="PF00709">
    <property type="entry name" value="Adenylsucc_synt"/>
    <property type="match status" value="1"/>
</dbReference>
<dbReference type="SMART" id="SM00788">
    <property type="entry name" value="Adenylsucc_synt"/>
    <property type="match status" value="1"/>
</dbReference>
<dbReference type="SUPFAM" id="SSF52540">
    <property type="entry name" value="P-loop containing nucleoside triphosphate hydrolases"/>
    <property type="match status" value="1"/>
</dbReference>
<dbReference type="PROSITE" id="PS01266">
    <property type="entry name" value="ADENYLOSUCCIN_SYN_1"/>
    <property type="match status" value="1"/>
</dbReference>
<dbReference type="PROSITE" id="PS00513">
    <property type="entry name" value="ADENYLOSUCCIN_SYN_2"/>
    <property type="match status" value="1"/>
</dbReference>
<accession>A7FZF9</accession>
<protein>
    <recommendedName>
        <fullName evidence="1">Adenylosuccinate synthetase</fullName>
        <shortName evidence="1">AMPSase</shortName>
        <shortName evidence="1">AdSS</shortName>
        <ecNumber evidence="1">6.3.4.4</ecNumber>
    </recommendedName>
    <alternativeName>
        <fullName evidence="1">IMP--aspartate ligase</fullName>
    </alternativeName>
</protein>
<sequence length="428" mass="47128">MSAFIVLGAQWGDEGKGKMTDYLAENADVVVRFQGGNNAGHTVVVGEKEYKLHLIPSGILYNDKLNVIGNGVVLDPKALFEEINYLESLGVEITPDRLIISDRAHVIMPYHRILDGIKERARGNKDIGTTGKGIGPSYTDKMERSGIRVCDLIHKEVFEENLKETLEVKNKIITEIFGGRALDYNEIYNEYLGYAEKLRPFVKDISVIVNKKIKDGKEVLFEGAQGTLLDIDYGTYPYVTSSSTIAGGVCIGAGVGPTAITNAVGIAKAYTTRVGKGPFPTELLDSTGDWVREKGHEFGVTTGRARRCGWLDLVILKTSARISGLTSFAVTKIDTLAGLDTLKVCTGYRLNGEIIDYVPASLEDLAKCEPIYEEFEGWDDSIANARCYEDLPENAIKYLKKIEDFTETKVSIVSVGPKRDQTMMISEI</sequence>
<proteinExistence type="inferred from homology"/>
<evidence type="ECO:0000255" key="1">
    <source>
        <dbReference type="HAMAP-Rule" id="MF_00011"/>
    </source>
</evidence>
<organism>
    <name type="scientific">Clostridium botulinum (strain ATCC 19397 / Type A)</name>
    <dbReference type="NCBI Taxonomy" id="441770"/>
    <lineage>
        <taxon>Bacteria</taxon>
        <taxon>Bacillati</taxon>
        <taxon>Bacillota</taxon>
        <taxon>Clostridia</taxon>
        <taxon>Eubacteriales</taxon>
        <taxon>Clostridiaceae</taxon>
        <taxon>Clostridium</taxon>
    </lineage>
</organism>